<evidence type="ECO:0000255" key="1">
    <source>
        <dbReference type="HAMAP-Rule" id="MF_00754"/>
    </source>
</evidence>
<keyword id="KW-0963">Cytoplasm</keyword>
<keyword id="KW-0255">Endonuclease</keyword>
<keyword id="KW-0378">Hydrolase</keyword>
<keyword id="KW-0540">Nuclease</keyword>
<keyword id="KW-1185">Reference proteome</keyword>
<keyword id="KW-0819">tRNA processing</keyword>
<feature type="chain" id="PRO_0000128441" description="Ribonuclease P protein component 1">
    <location>
        <begin position="1"/>
        <end position="87"/>
    </location>
</feature>
<gene>
    <name evidence="1" type="primary">rnp1</name>
    <name type="ordered locus">Ta1263.1</name>
</gene>
<reference key="1">
    <citation type="journal article" date="2000" name="Nature">
        <title>The genome sequence of the thermoacidophilic scavenger Thermoplasma acidophilum.</title>
        <authorList>
            <person name="Ruepp A."/>
            <person name="Graml W."/>
            <person name="Santos-Martinez M.-L."/>
            <person name="Koretke K.K."/>
            <person name="Volker C."/>
            <person name="Mewes H.-W."/>
            <person name="Frishman D."/>
            <person name="Stocker S."/>
            <person name="Lupas A.N."/>
            <person name="Baumeister W."/>
        </authorList>
    </citation>
    <scope>NUCLEOTIDE SEQUENCE [LARGE SCALE GENOMIC DNA]</scope>
    <source>
        <strain>ATCC 25905 / DSM 1728 / JCM 9062 / NBRC 15155 / AMRC-C165</strain>
    </source>
</reference>
<reference key="2">
    <citation type="unpublished observations" date="2004-03">
        <authorList>
            <person name="Coudert E."/>
        </authorList>
    </citation>
    <scope>IDENTIFICATION</scope>
</reference>
<comment type="function">
    <text evidence="1">Part of ribonuclease P, a protein complex that generates mature tRNA molecules by cleaving their 5'-ends.</text>
</comment>
<comment type="catalytic activity">
    <reaction evidence="1">
        <text>Endonucleolytic cleavage of RNA, removing 5'-extranucleotides from tRNA precursor.</text>
        <dbReference type="EC" id="3.1.26.5"/>
    </reaction>
</comment>
<comment type="subunit">
    <text evidence="1">Consists of a catalytic RNA component and at least 4-5 protein subunits.</text>
</comment>
<comment type="subcellular location">
    <subcellularLocation>
        <location evidence="1">Cytoplasm</location>
    </subcellularLocation>
</comment>
<comment type="similarity">
    <text evidence="1">Belongs to the eukaryotic/archaeal RNase P protein component 1 family.</text>
</comment>
<proteinExistence type="inferred from homology"/>
<sequence>MIYLDEFTGMEVSIVDSPNRSEIGRTGLVSFETKNTLEIDTGRKRIMIPKHLRKFRINGQFVDGDLINMRPEDRLREYRRILRDLRR</sequence>
<accession>P60835</accession>
<organism>
    <name type="scientific">Thermoplasma acidophilum (strain ATCC 25905 / DSM 1728 / JCM 9062 / NBRC 15155 / AMRC-C165)</name>
    <dbReference type="NCBI Taxonomy" id="273075"/>
    <lineage>
        <taxon>Archaea</taxon>
        <taxon>Methanobacteriati</taxon>
        <taxon>Thermoplasmatota</taxon>
        <taxon>Thermoplasmata</taxon>
        <taxon>Thermoplasmatales</taxon>
        <taxon>Thermoplasmataceae</taxon>
        <taxon>Thermoplasma</taxon>
    </lineage>
</organism>
<name>RNP1_THEAC</name>
<protein>
    <recommendedName>
        <fullName evidence="1">Ribonuclease P protein component 1</fullName>
        <shortName evidence="1">RNase P component 1</shortName>
        <ecNumber evidence="1">3.1.26.5</ecNumber>
    </recommendedName>
    <alternativeName>
        <fullName evidence="1">Rpp29</fullName>
    </alternativeName>
</protein>
<dbReference type="EC" id="3.1.26.5" evidence="1"/>
<dbReference type="EMBL" id="AL445067">
    <property type="status" value="NOT_ANNOTATED_CDS"/>
    <property type="molecule type" value="Genomic_DNA"/>
</dbReference>
<dbReference type="SMR" id="P60835"/>
<dbReference type="PaxDb" id="273075-Ta1263a"/>
<dbReference type="eggNOG" id="arCOG00784">
    <property type="taxonomic scope" value="Archaea"/>
</dbReference>
<dbReference type="InParanoid" id="P60835"/>
<dbReference type="OrthoDB" id="39019at2157"/>
<dbReference type="Proteomes" id="UP000001024">
    <property type="component" value="Chromosome"/>
</dbReference>
<dbReference type="GO" id="GO:0005737">
    <property type="term" value="C:cytoplasm"/>
    <property type="evidence" value="ECO:0007669"/>
    <property type="project" value="UniProtKB-SubCell"/>
</dbReference>
<dbReference type="GO" id="GO:0030677">
    <property type="term" value="C:ribonuclease P complex"/>
    <property type="evidence" value="ECO:0007669"/>
    <property type="project" value="UniProtKB-UniRule"/>
</dbReference>
<dbReference type="GO" id="GO:0004526">
    <property type="term" value="F:ribonuclease P activity"/>
    <property type="evidence" value="ECO:0007669"/>
    <property type="project" value="UniProtKB-UniRule"/>
</dbReference>
<dbReference type="GO" id="GO:0003723">
    <property type="term" value="F:RNA binding"/>
    <property type="evidence" value="ECO:0007669"/>
    <property type="project" value="InterPro"/>
</dbReference>
<dbReference type="GO" id="GO:0001682">
    <property type="term" value="P:tRNA 5'-leader removal"/>
    <property type="evidence" value="ECO:0007669"/>
    <property type="project" value="UniProtKB-UniRule"/>
</dbReference>
<dbReference type="Gene3D" id="2.30.30.210">
    <property type="entry name" value="Ribonuclease P/MRP, subunit p29"/>
    <property type="match status" value="1"/>
</dbReference>
<dbReference type="HAMAP" id="MF_00754">
    <property type="entry name" value="RNase_P_1"/>
    <property type="match status" value="1"/>
</dbReference>
<dbReference type="InterPro" id="IPR036980">
    <property type="entry name" value="RNase_P/MRP_Rpp29_sf"/>
</dbReference>
<dbReference type="InterPro" id="IPR023538">
    <property type="entry name" value="RNP1"/>
</dbReference>
<dbReference type="InterPro" id="IPR023534">
    <property type="entry name" value="Rof/RNase_P-like"/>
</dbReference>
<dbReference type="InterPro" id="IPR002730">
    <property type="entry name" value="Rpp29/RNP1"/>
</dbReference>
<dbReference type="NCBIfam" id="NF046110">
    <property type="entry name" value="RNaseP1Mthb"/>
    <property type="match status" value="1"/>
</dbReference>
<dbReference type="Pfam" id="PF01868">
    <property type="entry name" value="RNase_P-MRP_p29"/>
    <property type="match status" value="1"/>
</dbReference>
<dbReference type="SMART" id="SM00538">
    <property type="entry name" value="POP4"/>
    <property type="match status" value="1"/>
</dbReference>
<dbReference type="SUPFAM" id="SSF101744">
    <property type="entry name" value="Rof/RNase P subunit-like"/>
    <property type="match status" value="1"/>
</dbReference>